<gene>
    <name evidence="1" type="primary">tolB</name>
    <name type="ordered locus">SPA1995</name>
</gene>
<accession>Q5PCN2</accession>
<name>TOLB_SALPA</name>
<protein>
    <recommendedName>
        <fullName evidence="1">Tol-Pal system protein TolB</fullName>
    </recommendedName>
</protein>
<sequence length="430" mass="46149">MKQALRVAFGFLMLWAAVLHAEVRIEITQGVDSARPIGVVPFKWAGPGAAPEDIGGIVAADLRNSGKFNPLDRSRLPQQPATAQEVQPTAWSALGIDAVVVGQVTPNPDGSYNVAYQLVDTGGAPGTVLAQNSYKVNKQWLRYAGHTASDEVFEKLTGIKGAFRTRIAYVVQTNGGQFPYELRVSDYDGYNQFVVHRSPQPLMSPAWSPDGSKLAYVTFESGRSALVIQTLANGAVRQVASFPRHNGAPAFSPDGTKLAFALSKTGSLNLYVMDLASGQIRQITDGRSNNTEPTWFPDSQTLAFTSDQAGRPQVYKMNINGGAAQRITWEGSQNQDADVSSDGKFMVMVSSNNGQQHIAKQDLVTGGVQVLSSTFLDETPSLAPNGTMVIYSSSQGMGSVLNLVSTDGRFKARLPATDGQVKSPAWSPYL</sequence>
<comment type="function">
    <text evidence="1">Part of the Tol-Pal system, which plays a role in outer membrane invagination during cell division and is important for maintaining outer membrane integrity. TolB occupies a key intermediary position in the Tol-Pal system because it communicates directly with both membrane-embedded components, Pal in the outer membrane and TolA in the inner membrane.</text>
</comment>
<comment type="subunit">
    <text evidence="1">The Tol-Pal system is composed of five core proteins: the inner membrane proteins TolA, TolQ and TolR, the periplasmic protein TolB and the outer membrane protein Pal. They form a network linking the inner and outer membranes and the peptidoglycan layer.</text>
</comment>
<comment type="subcellular location">
    <subcellularLocation>
        <location evidence="1">Periplasm</location>
    </subcellularLocation>
</comment>
<comment type="similarity">
    <text evidence="1">Belongs to the TolB family.</text>
</comment>
<evidence type="ECO:0000255" key="1">
    <source>
        <dbReference type="HAMAP-Rule" id="MF_00671"/>
    </source>
</evidence>
<keyword id="KW-0131">Cell cycle</keyword>
<keyword id="KW-0132">Cell division</keyword>
<keyword id="KW-0574">Periplasm</keyword>
<keyword id="KW-0732">Signal</keyword>
<reference key="1">
    <citation type="journal article" date="2004" name="Nat. Genet.">
        <title>Comparison of genome degradation in Paratyphi A and Typhi, human-restricted serovars of Salmonella enterica that cause typhoid.</title>
        <authorList>
            <person name="McClelland M."/>
            <person name="Sanderson K.E."/>
            <person name="Clifton S.W."/>
            <person name="Latreille P."/>
            <person name="Porwollik S."/>
            <person name="Sabo A."/>
            <person name="Meyer R."/>
            <person name="Bieri T."/>
            <person name="Ozersky P."/>
            <person name="McLellan M."/>
            <person name="Harkins C.R."/>
            <person name="Wang C."/>
            <person name="Nguyen C."/>
            <person name="Berghoff A."/>
            <person name="Elliott G."/>
            <person name="Kohlberg S."/>
            <person name="Strong C."/>
            <person name="Du F."/>
            <person name="Carter J."/>
            <person name="Kremizki C."/>
            <person name="Layman D."/>
            <person name="Leonard S."/>
            <person name="Sun H."/>
            <person name="Fulton L."/>
            <person name="Nash W."/>
            <person name="Miner T."/>
            <person name="Minx P."/>
            <person name="Delehaunty K."/>
            <person name="Fronick C."/>
            <person name="Magrini V."/>
            <person name="Nhan M."/>
            <person name="Warren W."/>
            <person name="Florea L."/>
            <person name="Spieth J."/>
            <person name="Wilson R.K."/>
        </authorList>
    </citation>
    <scope>NUCLEOTIDE SEQUENCE [LARGE SCALE GENOMIC DNA]</scope>
    <source>
        <strain>ATCC 9150 / SARB42</strain>
    </source>
</reference>
<feature type="signal peptide" evidence="1">
    <location>
        <begin position="1"/>
        <end position="21"/>
    </location>
</feature>
<feature type="chain" id="PRO_0000034683" description="Tol-Pal system protein TolB" evidence="1">
    <location>
        <begin position="22"/>
        <end position="430"/>
    </location>
</feature>
<organism>
    <name type="scientific">Salmonella paratyphi A (strain ATCC 9150 / SARB42)</name>
    <dbReference type="NCBI Taxonomy" id="295319"/>
    <lineage>
        <taxon>Bacteria</taxon>
        <taxon>Pseudomonadati</taxon>
        <taxon>Pseudomonadota</taxon>
        <taxon>Gammaproteobacteria</taxon>
        <taxon>Enterobacterales</taxon>
        <taxon>Enterobacteriaceae</taxon>
        <taxon>Salmonella</taxon>
    </lineage>
</organism>
<proteinExistence type="inferred from homology"/>
<dbReference type="EMBL" id="CP000026">
    <property type="protein sequence ID" value="AAV77898.1"/>
    <property type="molecule type" value="Genomic_DNA"/>
</dbReference>
<dbReference type="RefSeq" id="WP_001562341.1">
    <property type="nucleotide sequence ID" value="NC_006511.1"/>
</dbReference>
<dbReference type="SMR" id="Q5PCN2"/>
<dbReference type="KEGG" id="spt:SPA1995"/>
<dbReference type="HOGENOM" id="CLU_047123_0_0_6"/>
<dbReference type="Proteomes" id="UP000008185">
    <property type="component" value="Chromosome"/>
</dbReference>
<dbReference type="GO" id="GO:0042597">
    <property type="term" value="C:periplasmic space"/>
    <property type="evidence" value="ECO:0007669"/>
    <property type="project" value="UniProtKB-SubCell"/>
</dbReference>
<dbReference type="GO" id="GO:0051301">
    <property type="term" value="P:cell division"/>
    <property type="evidence" value="ECO:0007669"/>
    <property type="project" value="UniProtKB-UniRule"/>
</dbReference>
<dbReference type="GO" id="GO:0017038">
    <property type="term" value="P:protein import"/>
    <property type="evidence" value="ECO:0007669"/>
    <property type="project" value="InterPro"/>
</dbReference>
<dbReference type="FunFam" id="2.120.10.30:FF:000022">
    <property type="entry name" value="Tol-Pal system protein TolB"/>
    <property type="match status" value="1"/>
</dbReference>
<dbReference type="FunFam" id="3.40.50.10070:FF:000001">
    <property type="entry name" value="Tol-Pal system protein TolB"/>
    <property type="match status" value="1"/>
</dbReference>
<dbReference type="Gene3D" id="2.120.10.30">
    <property type="entry name" value="TolB, C-terminal domain"/>
    <property type="match status" value="1"/>
</dbReference>
<dbReference type="Gene3D" id="3.40.50.10070">
    <property type="entry name" value="TolB, N-terminal domain"/>
    <property type="match status" value="1"/>
</dbReference>
<dbReference type="HAMAP" id="MF_00671">
    <property type="entry name" value="TolB"/>
    <property type="match status" value="1"/>
</dbReference>
<dbReference type="InterPro" id="IPR011042">
    <property type="entry name" value="6-blade_b-propeller_TolB-like"/>
</dbReference>
<dbReference type="InterPro" id="IPR011659">
    <property type="entry name" value="PD40"/>
</dbReference>
<dbReference type="InterPro" id="IPR014167">
    <property type="entry name" value="Tol-Pal_TolB"/>
</dbReference>
<dbReference type="InterPro" id="IPR007195">
    <property type="entry name" value="TolB_N"/>
</dbReference>
<dbReference type="NCBIfam" id="TIGR02800">
    <property type="entry name" value="propeller_TolB"/>
    <property type="match status" value="1"/>
</dbReference>
<dbReference type="PANTHER" id="PTHR36842:SF1">
    <property type="entry name" value="PROTEIN TOLB"/>
    <property type="match status" value="1"/>
</dbReference>
<dbReference type="PANTHER" id="PTHR36842">
    <property type="entry name" value="PROTEIN TOLB HOMOLOG"/>
    <property type="match status" value="1"/>
</dbReference>
<dbReference type="Pfam" id="PF07676">
    <property type="entry name" value="PD40"/>
    <property type="match status" value="4"/>
</dbReference>
<dbReference type="Pfam" id="PF04052">
    <property type="entry name" value="TolB_N"/>
    <property type="match status" value="1"/>
</dbReference>
<dbReference type="SUPFAM" id="SSF52964">
    <property type="entry name" value="TolB, N-terminal domain"/>
    <property type="match status" value="1"/>
</dbReference>
<dbReference type="SUPFAM" id="SSF69304">
    <property type="entry name" value="Tricorn protease N-terminal domain"/>
    <property type="match status" value="1"/>
</dbReference>